<proteinExistence type="inferred from homology"/>
<gene>
    <name evidence="1" type="primary">thiC</name>
    <name type="ordered locus">SF4066</name>
    <name type="ordered locus">S3669</name>
</gene>
<name>THIC_SHIFL</name>
<evidence type="ECO:0000255" key="1">
    <source>
        <dbReference type="HAMAP-Rule" id="MF_00089"/>
    </source>
</evidence>
<protein>
    <recommendedName>
        <fullName evidence="1">Phosphomethylpyrimidine synthase</fullName>
        <ecNumber evidence="1">4.1.99.17</ecNumber>
    </recommendedName>
    <alternativeName>
        <fullName evidence="1">Hydroxymethylpyrimidine phosphate synthase</fullName>
        <shortName evidence="1">HMP-P synthase</shortName>
        <shortName evidence="1">HMP-phosphate synthase</shortName>
        <shortName evidence="1">HMPP synthase</shortName>
    </alternativeName>
    <alternativeName>
        <fullName evidence="1">Thiamine biosynthesis protein ThiC</fullName>
    </alternativeName>
</protein>
<feature type="chain" id="PRO_0000152837" description="Phosphomethylpyrimidine synthase">
    <location>
        <begin position="1"/>
        <end position="631"/>
    </location>
</feature>
<feature type="binding site" evidence="1">
    <location>
        <position position="239"/>
    </location>
    <ligand>
        <name>substrate</name>
    </ligand>
</feature>
<feature type="binding site" evidence="1">
    <location>
        <position position="268"/>
    </location>
    <ligand>
        <name>substrate</name>
    </ligand>
</feature>
<feature type="binding site" evidence="1">
    <location>
        <position position="297"/>
    </location>
    <ligand>
        <name>substrate</name>
    </ligand>
</feature>
<feature type="binding site" evidence="1">
    <location>
        <position position="333"/>
    </location>
    <ligand>
        <name>substrate</name>
    </ligand>
</feature>
<feature type="binding site" evidence="1">
    <location>
        <begin position="353"/>
        <end position="355"/>
    </location>
    <ligand>
        <name>substrate</name>
    </ligand>
</feature>
<feature type="binding site" evidence="1">
    <location>
        <begin position="394"/>
        <end position="397"/>
    </location>
    <ligand>
        <name>substrate</name>
    </ligand>
</feature>
<feature type="binding site" evidence="1">
    <location>
        <position position="433"/>
    </location>
    <ligand>
        <name>substrate</name>
    </ligand>
</feature>
<feature type="binding site" evidence="1">
    <location>
        <position position="437"/>
    </location>
    <ligand>
        <name>Zn(2+)</name>
        <dbReference type="ChEBI" id="CHEBI:29105"/>
    </ligand>
</feature>
<feature type="binding site" evidence="1">
    <location>
        <position position="460"/>
    </location>
    <ligand>
        <name>substrate</name>
    </ligand>
</feature>
<feature type="binding site" evidence="1">
    <location>
        <position position="501"/>
    </location>
    <ligand>
        <name>Zn(2+)</name>
        <dbReference type="ChEBI" id="CHEBI:29105"/>
    </ligand>
</feature>
<feature type="binding site" evidence="1">
    <location>
        <position position="581"/>
    </location>
    <ligand>
        <name>[4Fe-4S] cluster</name>
        <dbReference type="ChEBI" id="CHEBI:49883"/>
        <note>4Fe-4S-S-AdoMet</note>
    </ligand>
</feature>
<feature type="binding site" evidence="1">
    <location>
        <position position="584"/>
    </location>
    <ligand>
        <name>[4Fe-4S] cluster</name>
        <dbReference type="ChEBI" id="CHEBI:49883"/>
        <note>4Fe-4S-S-AdoMet</note>
    </ligand>
</feature>
<feature type="binding site" evidence="1">
    <location>
        <position position="589"/>
    </location>
    <ligand>
        <name>[4Fe-4S] cluster</name>
        <dbReference type="ChEBI" id="CHEBI:49883"/>
        <note>4Fe-4S-S-AdoMet</note>
    </ligand>
</feature>
<keyword id="KW-0004">4Fe-4S</keyword>
<keyword id="KW-0408">Iron</keyword>
<keyword id="KW-0411">Iron-sulfur</keyword>
<keyword id="KW-0456">Lyase</keyword>
<keyword id="KW-0479">Metal-binding</keyword>
<keyword id="KW-1185">Reference proteome</keyword>
<keyword id="KW-0949">S-adenosyl-L-methionine</keyword>
<keyword id="KW-0784">Thiamine biosynthesis</keyword>
<keyword id="KW-0862">Zinc</keyword>
<organism>
    <name type="scientific">Shigella flexneri</name>
    <dbReference type="NCBI Taxonomy" id="623"/>
    <lineage>
        <taxon>Bacteria</taxon>
        <taxon>Pseudomonadati</taxon>
        <taxon>Pseudomonadota</taxon>
        <taxon>Gammaproteobacteria</taxon>
        <taxon>Enterobacterales</taxon>
        <taxon>Enterobacteriaceae</taxon>
        <taxon>Shigella</taxon>
    </lineage>
</organism>
<reference key="1">
    <citation type="journal article" date="2002" name="Nucleic Acids Res.">
        <title>Genome sequence of Shigella flexneri 2a: insights into pathogenicity through comparison with genomes of Escherichia coli K12 and O157.</title>
        <authorList>
            <person name="Jin Q."/>
            <person name="Yuan Z."/>
            <person name="Xu J."/>
            <person name="Wang Y."/>
            <person name="Shen Y."/>
            <person name="Lu W."/>
            <person name="Wang J."/>
            <person name="Liu H."/>
            <person name="Yang J."/>
            <person name="Yang F."/>
            <person name="Zhang X."/>
            <person name="Zhang J."/>
            <person name="Yang G."/>
            <person name="Wu H."/>
            <person name="Qu D."/>
            <person name="Dong J."/>
            <person name="Sun L."/>
            <person name="Xue Y."/>
            <person name="Zhao A."/>
            <person name="Gao Y."/>
            <person name="Zhu J."/>
            <person name="Kan B."/>
            <person name="Ding K."/>
            <person name="Chen S."/>
            <person name="Cheng H."/>
            <person name="Yao Z."/>
            <person name="He B."/>
            <person name="Chen R."/>
            <person name="Ma D."/>
            <person name="Qiang B."/>
            <person name="Wen Y."/>
            <person name="Hou Y."/>
            <person name="Yu J."/>
        </authorList>
    </citation>
    <scope>NUCLEOTIDE SEQUENCE [LARGE SCALE GENOMIC DNA]</scope>
    <source>
        <strain>301 / Serotype 2a</strain>
    </source>
</reference>
<reference key="2">
    <citation type="journal article" date="2003" name="Infect. Immun.">
        <title>Complete genome sequence and comparative genomics of Shigella flexneri serotype 2a strain 2457T.</title>
        <authorList>
            <person name="Wei J."/>
            <person name="Goldberg M.B."/>
            <person name="Burland V."/>
            <person name="Venkatesan M.M."/>
            <person name="Deng W."/>
            <person name="Fournier G."/>
            <person name="Mayhew G.F."/>
            <person name="Plunkett G. III"/>
            <person name="Rose D.J."/>
            <person name="Darling A."/>
            <person name="Mau B."/>
            <person name="Perna N.T."/>
            <person name="Payne S.M."/>
            <person name="Runyen-Janecky L.J."/>
            <person name="Zhou S."/>
            <person name="Schwartz D.C."/>
            <person name="Blattner F.R."/>
        </authorList>
    </citation>
    <scope>NUCLEOTIDE SEQUENCE [LARGE SCALE GENOMIC DNA]</scope>
    <source>
        <strain>ATCC 700930 / 2457T / Serotype 2a</strain>
    </source>
</reference>
<sequence>MSATKLTRREQRARAQHFIDTLEGTAFPNSKRIYITGTHPGVRVPMREIQLSPTLIGGSKEQPQYEENEAIPVYDTSGPYGDPQIAINVQQGLAKLRQPWIDARADTEELTVRSSDYTRTRLADDGLDELRFSGLLTPKRAKTGRRVTQLHYARQGIITPEMEFIAIRENMGRERIRSEVLRHQHPGMSFGAHLPENITAEFVRDEVAAGRAIIPANINHPESEPMIIGRNFLVKVNANIGNSAVTSSIEEEVEKLVWSTRWGADTVMDLSTGRYIHETREWILRNSPVPIGTVPIYQALEKVNGIAEDLTWEAFRDTLLEQAEQGVDYFTIHAGVLLRYVPMTAKRLTGIVSRGGSIMAKWCLSHHQENFLYQHFREICEICAAYDVSLSLGDGLRPGSIQDANDEAQFAELHTLGELTKIAWEYDVQVMIEGPGHVPMQMIRRNMTEELEHCHEAPFYTLGPLTTDIAPGYDHFTSGIGAAMIGWFGCAMLCYVTPKEHLGLPNKEDVKQGLITYKIAAHAADLAKGHPGAQIRDNAMSKARFEFRWEDQFNLALDPFTARAYHDETLPQESGKVAHFCSMCGPKFCSMKISQEVRDYAAAQTIEVGMADMSENFRARGGEIYLHKEEA</sequence>
<dbReference type="EC" id="4.1.99.17" evidence="1"/>
<dbReference type="EMBL" id="AE005674">
    <property type="protein sequence ID" value="AAN45495.1"/>
    <property type="molecule type" value="Genomic_DNA"/>
</dbReference>
<dbReference type="EMBL" id="AE014073">
    <property type="protein sequence ID" value="AAP18706.1"/>
    <property type="molecule type" value="Genomic_DNA"/>
</dbReference>
<dbReference type="RefSeq" id="NP_709788.1">
    <property type="nucleotide sequence ID" value="NC_004337.2"/>
</dbReference>
<dbReference type="RefSeq" id="WP_001276920.1">
    <property type="nucleotide sequence ID" value="NZ_WPGW01000040.1"/>
</dbReference>
<dbReference type="SMR" id="Q83PB8"/>
<dbReference type="STRING" id="198214.SF4066"/>
<dbReference type="PaxDb" id="198214-SF4066"/>
<dbReference type="GeneID" id="1024228"/>
<dbReference type="KEGG" id="sfl:SF4066"/>
<dbReference type="KEGG" id="sfx:S3669"/>
<dbReference type="PATRIC" id="fig|198214.7.peg.4790"/>
<dbReference type="HOGENOM" id="CLU_013181_2_1_6"/>
<dbReference type="UniPathway" id="UPA00060"/>
<dbReference type="Proteomes" id="UP000001006">
    <property type="component" value="Chromosome"/>
</dbReference>
<dbReference type="Proteomes" id="UP000002673">
    <property type="component" value="Chromosome"/>
</dbReference>
<dbReference type="GO" id="GO:0005829">
    <property type="term" value="C:cytosol"/>
    <property type="evidence" value="ECO:0007669"/>
    <property type="project" value="TreeGrafter"/>
</dbReference>
<dbReference type="GO" id="GO:0051539">
    <property type="term" value="F:4 iron, 4 sulfur cluster binding"/>
    <property type="evidence" value="ECO:0007669"/>
    <property type="project" value="UniProtKB-KW"/>
</dbReference>
<dbReference type="GO" id="GO:0016830">
    <property type="term" value="F:carbon-carbon lyase activity"/>
    <property type="evidence" value="ECO:0007669"/>
    <property type="project" value="InterPro"/>
</dbReference>
<dbReference type="GO" id="GO:0008270">
    <property type="term" value="F:zinc ion binding"/>
    <property type="evidence" value="ECO:0007669"/>
    <property type="project" value="UniProtKB-UniRule"/>
</dbReference>
<dbReference type="GO" id="GO:0009228">
    <property type="term" value="P:thiamine biosynthetic process"/>
    <property type="evidence" value="ECO:0007669"/>
    <property type="project" value="UniProtKB-KW"/>
</dbReference>
<dbReference type="GO" id="GO:0009229">
    <property type="term" value="P:thiamine diphosphate biosynthetic process"/>
    <property type="evidence" value="ECO:0007669"/>
    <property type="project" value="UniProtKB-UniRule"/>
</dbReference>
<dbReference type="FunFam" id="3.20.20.540:FF:000001">
    <property type="entry name" value="Phosphomethylpyrimidine synthase"/>
    <property type="match status" value="1"/>
</dbReference>
<dbReference type="Gene3D" id="6.10.250.620">
    <property type="match status" value="1"/>
</dbReference>
<dbReference type="Gene3D" id="3.20.20.540">
    <property type="entry name" value="Radical SAM ThiC family, central domain"/>
    <property type="match status" value="1"/>
</dbReference>
<dbReference type="HAMAP" id="MF_00089">
    <property type="entry name" value="ThiC"/>
    <property type="match status" value="1"/>
</dbReference>
<dbReference type="InterPro" id="IPR037509">
    <property type="entry name" value="ThiC"/>
</dbReference>
<dbReference type="InterPro" id="IPR025747">
    <property type="entry name" value="ThiC-associated_dom"/>
</dbReference>
<dbReference type="InterPro" id="IPR038521">
    <property type="entry name" value="ThiC/Bza_core_dom"/>
</dbReference>
<dbReference type="InterPro" id="IPR002817">
    <property type="entry name" value="ThiC/BzaA/B"/>
</dbReference>
<dbReference type="NCBIfam" id="NF006763">
    <property type="entry name" value="PRK09284.1"/>
    <property type="match status" value="1"/>
</dbReference>
<dbReference type="NCBIfam" id="NF009895">
    <property type="entry name" value="PRK13352.1"/>
    <property type="match status" value="1"/>
</dbReference>
<dbReference type="NCBIfam" id="TIGR00190">
    <property type="entry name" value="thiC"/>
    <property type="match status" value="1"/>
</dbReference>
<dbReference type="PANTHER" id="PTHR30557:SF1">
    <property type="entry name" value="PHOSPHOMETHYLPYRIMIDINE SYNTHASE, CHLOROPLASTIC"/>
    <property type="match status" value="1"/>
</dbReference>
<dbReference type="PANTHER" id="PTHR30557">
    <property type="entry name" value="THIAMINE BIOSYNTHESIS PROTEIN THIC"/>
    <property type="match status" value="1"/>
</dbReference>
<dbReference type="Pfam" id="PF13667">
    <property type="entry name" value="ThiC-associated"/>
    <property type="match status" value="1"/>
</dbReference>
<dbReference type="Pfam" id="PF01964">
    <property type="entry name" value="ThiC_Rad_SAM"/>
    <property type="match status" value="1"/>
</dbReference>
<dbReference type="SFLD" id="SFLDF00407">
    <property type="entry name" value="phosphomethylpyrimidine_syntha"/>
    <property type="match status" value="1"/>
</dbReference>
<dbReference type="SFLD" id="SFLDG01114">
    <property type="entry name" value="phosphomethylpyrimidine_syntha"/>
    <property type="match status" value="1"/>
</dbReference>
<dbReference type="SFLD" id="SFLDS00113">
    <property type="entry name" value="Radical_SAM_Phosphomethylpyrim"/>
    <property type="match status" value="1"/>
</dbReference>
<accession>Q83PB8</accession>
<comment type="function">
    <text evidence="1">Catalyzes the synthesis of the hydroxymethylpyrimidine phosphate (HMP-P) moiety of thiamine from aminoimidazole ribotide (AIR) in a radical S-adenosyl-L-methionine (SAM)-dependent reaction.</text>
</comment>
<comment type="catalytic activity">
    <reaction evidence="1">
        <text>5-amino-1-(5-phospho-beta-D-ribosyl)imidazole + S-adenosyl-L-methionine = 4-amino-2-methyl-5-(phosphooxymethyl)pyrimidine + CO + 5'-deoxyadenosine + formate + L-methionine + 3 H(+)</text>
        <dbReference type="Rhea" id="RHEA:24840"/>
        <dbReference type="ChEBI" id="CHEBI:15378"/>
        <dbReference type="ChEBI" id="CHEBI:15740"/>
        <dbReference type="ChEBI" id="CHEBI:17245"/>
        <dbReference type="ChEBI" id="CHEBI:17319"/>
        <dbReference type="ChEBI" id="CHEBI:57844"/>
        <dbReference type="ChEBI" id="CHEBI:58354"/>
        <dbReference type="ChEBI" id="CHEBI:59789"/>
        <dbReference type="ChEBI" id="CHEBI:137981"/>
        <dbReference type="EC" id="4.1.99.17"/>
    </reaction>
</comment>
<comment type="cofactor">
    <cofactor evidence="1">
        <name>[4Fe-4S] cluster</name>
        <dbReference type="ChEBI" id="CHEBI:49883"/>
    </cofactor>
    <text evidence="1">Binds 1 [4Fe-4S] cluster per subunit. The cluster is coordinated with 3 cysteines and an exchangeable S-adenosyl-L-methionine.</text>
</comment>
<comment type="pathway">
    <text evidence="1">Cofactor biosynthesis; thiamine diphosphate biosynthesis.</text>
</comment>
<comment type="subunit">
    <text evidence="1">Homodimer.</text>
</comment>
<comment type="similarity">
    <text evidence="1">Belongs to the ThiC family.</text>
</comment>